<dbReference type="EMBL" id="CP001283">
    <property type="protein sequence ID" value="ACK87355.1"/>
    <property type="molecule type" value="Genomic_DNA"/>
</dbReference>
<dbReference type="RefSeq" id="WP_001080831.1">
    <property type="nucleotide sequence ID" value="NC_011773.1"/>
</dbReference>
<dbReference type="SMR" id="B7JKD1"/>
<dbReference type="GeneID" id="93010931"/>
<dbReference type="KEGG" id="bcu:BCAH820_0134"/>
<dbReference type="HOGENOM" id="CLU_061015_2_1_9"/>
<dbReference type="Proteomes" id="UP000001363">
    <property type="component" value="Chromosome"/>
</dbReference>
<dbReference type="GO" id="GO:1990904">
    <property type="term" value="C:ribonucleoprotein complex"/>
    <property type="evidence" value="ECO:0007669"/>
    <property type="project" value="UniProtKB-KW"/>
</dbReference>
<dbReference type="GO" id="GO:0005840">
    <property type="term" value="C:ribosome"/>
    <property type="evidence" value="ECO:0007669"/>
    <property type="project" value="UniProtKB-KW"/>
</dbReference>
<dbReference type="GO" id="GO:0019843">
    <property type="term" value="F:rRNA binding"/>
    <property type="evidence" value="ECO:0007669"/>
    <property type="project" value="UniProtKB-UniRule"/>
</dbReference>
<dbReference type="GO" id="GO:0003735">
    <property type="term" value="F:structural constituent of ribosome"/>
    <property type="evidence" value="ECO:0007669"/>
    <property type="project" value="InterPro"/>
</dbReference>
<dbReference type="GO" id="GO:0000049">
    <property type="term" value="F:tRNA binding"/>
    <property type="evidence" value="ECO:0007669"/>
    <property type="project" value="UniProtKB-UniRule"/>
</dbReference>
<dbReference type="GO" id="GO:0006412">
    <property type="term" value="P:translation"/>
    <property type="evidence" value="ECO:0007669"/>
    <property type="project" value="UniProtKB-UniRule"/>
</dbReference>
<dbReference type="FunFam" id="3.30.1440.10:FF:000001">
    <property type="entry name" value="50S ribosomal protein L5"/>
    <property type="match status" value="1"/>
</dbReference>
<dbReference type="Gene3D" id="3.30.1440.10">
    <property type="match status" value="1"/>
</dbReference>
<dbReference type="HAMAP" id="MF_01333_B">
    <property type="entry name" value="Ribosomal_uL5_B"/>
    <property type="match status" value="1"/>
</dbReference>
<dbReference type="InterPro" id="IPR002132">
    <property type="entry name" value="Ribosomal_uL5"/>
</dbReference>
<dbReference type="InterPro" id="IPR020930">
    <property type="entry name" value="Ribosomal_uL5_bac-type"/>
</dbReference>
<dbReference type="InterPro" id="IPR031309">
    <property type="entry name" value="Ribosomal_uL5_C"/>
</dbReference>
<dbReference type="InterPro" id="IPR020929">
    <property type="entry name" value="Ribosomal_uL5_CS"/>
</dbReference>
<dbReference type="InterPro" id="IPR022803">
    <property type="entry name" value="Ribosomal_uL5_dom_sf"/>
</dbReference>
<dbReference type="InterPro" id="IPR031310">
    <property type="entry name" value="Ribosomal_uL5_N"/>
</dbReference>
<dbReference type="NCBIfam" id="NF000585">
    <property type="entry name" value="PRK00010.1"/>
    <property type="match status" value="1"/>
</dbReference>
<dbReference type="PANTHER" id="PTHR11994">
    <property type="entry name" value="60S RIBOSOMAL PROTEIN L11-RELATED"/>
    <property type="match status" value="1"/>
</dbReference>
<dbReference type="Pfam" id="PF00281">
    <property type="entry name" value="Ribosomal_L5"/>
    <property type="match status" value="1"/>
</dbReference>
<dbReference type="Pfam" id="PF00673">
    <property type="entry name" value="Ribosomal_L5_C"/>
    <property type="match status" value="1"/>
</dbReference>
<dbReference type="PIRSF" id="PIRSF002161">
    <property type="entry name" value="Ribosomal_L5"/>
    <property type="match status" value="1"/>
</dbReference>
<dbReference type="SUPFAM" id="SSF55282">
    <property type="entry name" value="RL5-like"/>
    <property type="match status" value="1"/>
</dbReference>
<dbReference type="PROSITE" id="PS00358">
    <property type="entry name" value="RIBOSOMAL_L5"/>
    <property type="match status" value="1"/>
</dbReference>
<keyword id="KW-0687">Ribonucleoprotein</keyword>
<keyword id="KW-0689">Ribosomal protein</keyword>
<keyword id="KW-0694">RNA-binding</keyword>
<keyword id="KW-0699">rRNA-binding</keyword>
<keyword id="KW-0820">tRNA-binding</keyword>
<evidence type="ECO:0000255" key="1">
    <source>
        <dbReference type="HAMAP-Rule" id="MF_01333"/>
    </source>
</evidence>
<evidence type="ECO:0000305" key="2"/>
<name>RL5_BACC0</name>
<accession>B7JKD1</accession>
<protein>
    <recommendedName>
        <fullName evidence="1">Large ribosomal subunit protein uL5</fullName>
    </recommendedName>
    <alternativeName>
        <fullName evidence="2">50S ribosomal protein L5</fullName>
    </alternativeName>
</protein>
<feature type="chain" id="PRO_1000142351" description="Large ribosomal subunit protein uL5">
    <location>
        <begin position="1"/>
        <end position="179"/>
    </location>
</feature>
<proteinExistence type="inferred from homology"/>
<gene>
    <name evidence="1" type="primary">rplE</name>
    <name type="ordered locus">BCAH820_0134</name>
</gene>
<comment type="function">
    <text evidence="1">This is one of the proteins that bind and probably mediate the attachment of the 5S RNA into the large ribosomal subunit, where it forms part of the central protuberance. In the 70S ribosome it contacts protein S13 of the 30S subunit (bridge B1b), connecting the 2 subunits; this bridge is implicated in subunit movement. Contacts the P site tRNA; the 5S rRNA and some of its associated proteins might help stabilize positioning of ribosome-bound tRNAs.</text>
</comment>
<comment type="subunit">
    <text evidence="1">Part of the 50S ribosomal subunit; part of the 5S rRNA/L5/L18/L25 subcomplex. Contacts the 5S rRNA and the P site tRNA. Forms a bridge to the 30S subunit in the 70S ribosome.</text>
</comment>
<comment type="similarity">
    <text evidence="1">Belongs to the universal ribosomal protein uL5 family.</text>
</comment>
<sequence>MNRLKEKFQKEITPALVSKFNYKSVMQVPKIEKIVINTGVGDAVSNSKALDNAVEELTQITGQKPVVTRAKKSIAGFRLREGMPIGAKVTLRGEQMYEFFDKLVSVSLPRVRDFRGVSKKSFDGRGNYTLGVKEQLIFPEIDYDKVSKVRGMDIVIVTTAKTDEEARELLTQFGMPFQK</sequence>
<organism>
    <name type="scientific">Bacillus cereus (strain AH820)</name>
    <dbReference type="NCBI Taxonomy" id="405535"/>
    <lineage>
        <taxon>Bacteria</taxon>
        <taxon>Bacillati</taxon>
        <taxon>Bacillota</taxon>
        <taxon>Bacilli</taxon>
        <taxon>Bacillales</taxon>
        <taxon>Bacillaceae</taxon>
        <taxon>Bacillus</taxon>
        <taxon>Bacillus cereus group</taxon>
    </lineage>
</organism>
<reference key="1">
    <citation type="submission" date="2008-10" db="EMBL/GenBank/DDBJ databases">
        <title>Genome sequence of Bacillus cereus AH820.</title>
        <authorList>
            <person name="Dodson R.J."/>
            <person name="Durkin A.S."/>
            <person name="Rosovitz M.J."/>
            <person name="Rasko D.A."/>
            <person name="Hoffmaster A."/>
            <person name="Ravel J."/>
            <person name="Sutton G."/>
        </authorList>
    </citation>
    <scope>NUCLEOTIDE SEQUENCE [LARGE SCALE GENOMIC DNA]</scope>
    <source>
        <strain>AH820</strain>
    </source>
</reference>